<feature type="chain" id="PRO_0000362058" description="Probable protein kinase DDB_G0291842">
    <location>
        <begin position="1"/>
        <end position="352"/>
    </location>
</feature>
<feature type="domain" description="Protein kinase" evidence="2">
    <location>
        <begin position="77"/>
        <end position="331"/>
    </location>
</feature>
<feature type="region of interest" description="Disordered" evidence="4">
    <location>
        <begin position="1"/>
        <end position="57"/>
    </location>
</feature>
<feature type="compositionally biased region" description="Basic and acidic residues" evidence="4">
    <location>
        <begin position="10"/>
        <end position="34"/>
    </location>
</feature>
<feature type="compositionally biased region" description="Low complexity" evidence="4">
    <location>
        <begin position="38"/>
        <end position="56"/>
    </location>
</feature>
<feature type="active site" description="Proton acceptor" evidence="2 3">
    <location>
        <position position="207"/>
    </location>
</feature>
<feature type="binding site" evidence="2">
    <location>
        <begin position="83"/>
        <end position="91"/>
    </location>
    <ligand>
        <name>ATP</name>
        <dbReference type="ChEBI" id="CHEBI:30616"/>
    </ligand>
</feature>
<feature type="binding site" evidence="2">
    <location>
        <position position="106"/>
    </location>
    <ligand>
        <name>ATP</name>
        <dbReference type="ChEBI" id="CHEBI:30616"/>
    </ligand>
</feature>
<feature type="binding site" evidence="1">
    <location>
        <position position="212"/>
    </location>
    <ligand>
        <name>Mg(2+)</name>
        <dbReference type="ChEBI" id="CHEBI:18420"/>
    </ligand>
</feature>
<feature type="binding site" evidence="1">
    <location>
        <position position="225"/>
    </location>
    <ligand>
        <name>Mg(2+)</name>
        <dbReference type="ChEBI" id="CHEBI:18420"/>
    </ligand>
</feature>
<name>Y6398_DICDI</name>
<reference key="1">
    <citation type="journal article" date="2005" name="Nature">
        <title>The genome of the social amoeba Dictyostelium discoideum.</title>
        <authorList>
            <person name="Eichinger L."/>
            <person name="Pachebat J.A."/>
            <person name="Gloeckner G."/>
            <person name="Rajandream M.A."/>
            <person name="Sucgang R."/>
            <person name="Berriman M."/>
            <person name="Song J."/>
            <person name="Olsen R."/>
            <person name="Szafranski K."/>
            <person name="Xu Q."/>
            <person name="Tunggal B."/>
            <person name="Kummerfeld S."/>
            <person name="Madera M."/>
            <person name="Konfortov B.A."/>
            <person name="Rivero F."/>
            <person name="Bankier A.T."/>
            <person name="Lehmann R."/>
            <person name="Hamlin N."/>
            <person name="Davies R."/>
            <person name="Gaudet P."/>
            <person name="Fey P."/>
            <person name="Pilcher K."/>
            <person name="Chen G."/>
            <person name="Saunders D."/>
            <person name="Sodergren E.J."/>
            <person name="Davis P."/>
            <person name="Kerhornou A."/>
            <person name="Nie X."/>
            <person name="Hall N."/>
            <person name="Anjard C."/>
            <person name="Hemphill L."/>
            <person name="Bason N."/>
            <person name="Farbrother P."/>
            <person name="Desany B."/>
            <person name="Just E."/>
            <person name="Morio T."/>
            <person name="Rost R."/>
            <person name="Churcher C.M."/>
            <person name="Cooper J."/>
            <person name="Haydock S."/>
            <person name="van Driessche N."/>
            <person name="Cronin A."/>
            <person name="Goodhead I."/>
            <person name="Muzny D.M."/>
            <person name="Mourier T."/>
            <person name="Pain A."/>
            <person name="Lu M."/>
            <person name="Harper D."/>
            <person name="Lindsay R."/>
            <person name="Hauser H."/>
            <person name="James K.D."/>
            <person name="Quiles M."/>
            <person name="Madan Babu M."/>
            <person name="Saito T."/>
            <person name="Buchrieser C."/>
            <person name="Wardroper A."/>
            <person name="Felder M."/>
            <person name="Thangavelu M."/>
            <person name="Johnson D."/>
            <person name="Knights A."/>
            <person name="Loulseged H."/>
            <person name="Mungall K.L."/>
            <person name="Oliver K."/>
            <person name="Price C."/>
            <person name="Quail M.A."/>
            <person name="Urushihara H."/>
            <person name="Hernandez J."/>
            <person name="Rabbinowitsch E."/>
            <person name="Steffen D."/>
            <person name="Sanders M."/>
            <person name="Ma J."/>
            <person name="Kohara Y."/>
            <person name="Sharp S."/>
            <person name="Simmonds M.N."/>
            <person name="Spiegler S."/>
            <person name="Tivey A."/>
            <person name="Sugano S."/>
            <person name="White B."/>
            <person name="Walker D."/>
            <person name="Woodward J.R."/>
            <person name="Winckler T."/>
            <person name="Tanaka Y."/>
            <person name="Shaulsky G."/>
            <person name="Schleicher M."/>
            <person name="Weinstock G.M."/>
            <person name="Rosenthal A."/>
            <person name="Cox E.C."/>
            <person name="Chisholm R.L."/>
            <person name="Gibbs R.A."/>
            <person name="Loomis W.F."/>
            <person name="Platzer M."/>
            <person name="Kay R.R."/>
            <person name="Williams J.G."/>
            <person name="Dear P.H."/>
            <person name="Noegel A.A."/>
            <person name="Barrell B.G."/>
            <person name="Kuspa A."/>
        </authorList>
    </citation>
    <scope>NUCLEOTIDE SEQUENCE [LARGE SCALE GENOMIC DNA]</scope>
    <source>
        <strain>AX4</strain>
    </source>
</reference>
<organism>
    <name type="scientific">Dictyostelium discoideum</name>
    <name type="common">Social amoeba</name>
    <dbReference type="NCBI Taxonomy" id="44689"/>
    <lineage>
        <taxon>Eukaryota</taxon>
        <taxon>Amoebozoa</taxon>
        <taxon>Evosea</taxon>
        <taxon>Eumycetozoa</taxon>
        <taxon>Dictyostelia</taxon>
        <taxon>Dictyosteliales</taxon>
        <taxon>Dictyosteliaceae</taxon>
        <taxon>Dictyostelium</taxon>
    </lineage>
</organism>
<accession>Q54E34</accession>
<gene>
    <name type="ORF">DDB_G0291842</name>
</gene>
<dbReference type="EC" id="2.7.11.1"/>
<dbReference type="EMBL" id="AAFI02000185">
    <property type="protein sequence ID" value="EAL61542.1"/>
    <property type="molecule type" value="Genomic_DNA"/>
</dbReference>
<dbReference type="RefSeq" id="XP_629953.1">
    <property type="nucleotide sequence ID" value="XM_629951.1"/>
</dbReference>
<dbReference type="SMR" id="Q54E34"/>
<dbReference type="FunCoup" id="Q54E34">
    <property type="interactions" value="162"/>
</dbReference>
<dbReference type="STRING" id="44689.Q54E34"/>
<dbReference type="PaxDb" id="44689-DDB0216398"/>
<dbReference type="EnsemblProtists" id="EAL61542">
    <property type="protein sequence ID" value="EAL61542"/>
    <property type="gene ID" value="DDB_G0291842"/>
</dbReference>
<dbReference type="GeneID" id="8628359"/>
<dbReference type="KEGG" id="ddi:DDB_G0291842"/>
<dbReference type="dictyBase" id="DDB_G0291842"/>
<dbReference type="VEuPathDB" id="AmoebaDB:DDB_G0291842"/>
<dbReference type="eggNOG" id="KOG0601">
    <property type="taxonomic scope" value="Eukaryota"/>
</dbReference>
<dbReference type="HOGENOM" id="CLU_000288_25_2_1"/>
<dbReference type="InParanoid" id="Q54E34"/>
<dbReference type="OMA" id="DRRYMSP"/>
<dbReference type="PhylomeDB" id="Q54E34"/>
<dbReference type="Reactome" id="R-DDI-156711">
    <property type="pathway name" value="Polo-like kinase mediated events"/>
</dbReference>
<dbReference type="PRO" id="PR:Q54E34"/>
<dbReference type="Proteomes" id="UP000002195">
    <property type="component" value="Chromosome 6"/>
</dbReference>
<dbReference type="GO" id="GO:0005737">
    <property type="term" value="C:cytoplasm"/>
    <property type="evidence" value="ECO:0000318"/>
    <property type="project" value="GO_Central"/>
</dbReference>
<dbReference type="GO" id="GO:0005634">
    <property type="term" value="C:nucleus"/>
    <property type="evidence" value="ECO:0000250"/>
    <property type="project" value="dictyBase"/>
</dbReference>
<dbReference type="GO" id="GO:0005524">
    <property type="term" value="F:ATP binding"/>
    <property type="evidence" value="ECO:0007669"/>
    <property type="project" value="UniProtKB-KW"/>
</dbReference>
<dbReference type="GO" id="GO:0046872">
    <property type="term" value="F:metal ion binding"/>
    <property type="evidence" value="ECO:0007669"/>
    <property type="project" value="UniProtKB-KW"/>
</dbReference>
<dbReference type="GO" id="GO:0004672">
    <property type="term" value="F:protein kinase activity"/>
    <property type="evidence" value="ECO:0000318"/>
    <property type="project" value="GO_Central"/>
</dbReference>
<dbReference type="GO" id="GO:0106310">
    <property type="term" value="F:protein serine kinase activity"/>
    <property type="evidence" value="ECO:0007669"/>
    <property type="project" value="RHEA"/>
</dbReference>
<dbReference type="GO" id="GO:0004674">
    <property type="term" value="F:protein serine/threonine kinase activity"/>
    <property type="evidence" value="ECO:0007669"/>
    <property type="project" value="UniProtKB-KW"/>
</dbReference>
<dbReference type="GO" id="GO:0004713">
    <property type="term" value="F:protein tyrosine kinase activity"/>
    <property type="evidence" value="ECO:0000250"/>
    <property type="project" value="dictyBase"/>
</dbReference>
<dbReference type="GO" id="GO:0000076">
    <property type="term" value="P:DNA replication checkpoint signaling"/>
    <property type="evidence" value="ECO:0007669"/>
    <property type="project" value="InterPro"/>
</dbReference>
<dbReference type="GO" id="GO:0010972">
    <property type="term" value="P:negative regulation of G2/M transition of mitotic cell cycle"/>
    <property type="evidence" value="ECO:0000318"/>
    <property type="project" value="GO_Central"/>
</dbReference>
<dbReference type="GO" id="GO:0110031">
    <property type="term" value="P:negative regulation of G2/MI transition of meiotic cell cycle"/>
    <property type="evidence" value="ECO:0000318"/>
    <property type="project" value="GO_Central"/>
</dbReference>
<dbReference type="CDD" id="cd13997">
    <property type="entry name" value="PKc_Wee1_like"/>
    <property type="match status" value="1"/>
</dbReference>
<dbReference type="FunFam" id="1.10.510.10:FF:001421">
    <property type="entry name" value="Membrane-associated tyrosine-and threonine-specific cdc2-inhibitory kinase-like Protein"/>
    <property type="match status" value="1"/>
</dbReference>
<dbReference type="FunFam" id="3.30.200.20:FF:001539">
    <property type="entry name" value="Probable protein kinase DDB_G0291842"/>
    <property type="match status" value="1"/>
</dbReference>
<dbReference type="Gene3D" id="3.30.200.20">
    <property type="entry name" value="Phosphorylase Kinase, domain 1"/>
    <property type="match status" value="1"/>
</dbReference>
<dbReference type="Gene3D" id="1.10.510.10">
    <property type="entry name" value="Transferase(Phosphotransferase) domain 1"/>
    <property type="match status" value="1"/>
</dbReference>
<dbReference type="InterPro" id="IPR050339">
    <property type="entry name" value="CC_SR_Kinase"/>
</dbReference>
<dbReference type="InterPro" id="IPR011009">
    <property type="entry name" value="Kinase-like_dom_sf"/>
</dbReference>
<dbReference type="InterPro" id="IPR045067">
    <property type="entry name" value="PKc_Wee1-like"/>
</dbReference>
<dbReference type="InterPro" id="IPR000719">
    <property type="entry name" value="Prot_kinase_dom"/>
</dbReference>
<dbReference type="InterPro" id="IPR017441">
    <property type="entry name" value="Protein_kinase_ATP_BS"/>
</dbReference>
<dbReference type="InterPro" id="IPR008271">
    <property type="entry name" value="Ser/Thr_kinase_AS"/>
</dbReference>
<dbReference type="PANTHER" id="PTHR11042">
    <property type="entry name" value="EUKARYOTIC TRANSLATION INITIATION FACTOR 2-ALPHA KINASE EIF2-ALPHA KINASE -RELATED"/>
    <property type="match status" value="1"/>
</dbReference>
<dbReference type="PANTHER" id="PTHR11042:SF177">
    <property type="entry name" value="PROTEIN KINASE DDB_G0291842-RELATED"/>
    <property type="match status" value="1"/>
</dbReference>
<dbReference type="Pfam" id="PF00069">
    <property type="entry name" value="Pkinase"/>
    <property type="match status" value="1"/>
</dbReference>
<dbReference type="SMART" id="SM00220">
    <property type="entry name" value="S_TKc"/>
    <property type="match status" value="1"/>
</dbReference>
<dbReference type="SUPFAM" id="SSF56112">
    <property type="entry name" value="Protein kinase-like (PK-like)"/>
    <property type="match status" value="1"/>
</dbReference>
<dbReference type="PROSITE" id="PS00107">
    <property type="entry name" value="PROTEIN_KINASE_ATP"/>
    <property type="match status" value="1"/>
</dbReference>
<dbReference type="PROSITE" id="PS50011">
    <property type="entry name" value="PROTEIN_KINASE_DOM"/>
    <property type="match status" value="1"/>
</dbReference>
<dbReference type="PROSITE" id="PS00108">
    <property type="entry name" value="PROTEIN_KINASE_ST"/>
    <property type="match status" value="1"/>
</dbReference>
<protein>
    <recommendedName>
        <fullName>Probable protein kinase DDB_G0291842</fullName>
        <ecNumber>2.7.11.1</ecNumber>
    </recommendedName>
</protein>
<keyword id="KW-0067">ATP-binding</keyword>
<keyword id="KW-0418">Kinase</keyword>
<keyword id="KW-0460">Magnesium</keyword>
<keyword id="KW-0479">Metal-binding</keyword>
<keyword id="KW-0547">Nucleotide-binding</keyword>
<keyword id="KW-1185">Reference proteome</keyword>
<keyword id="KW-0723">Serine/threonine-protein kinase</keyword>
<keyword id="KW-0808">Transferase</keyword>
<evidence type="ECO:0000250" key="1"/>
<evidence type="ECO:0000255" key="2">
    <source>
        <dbReference type="PROSITE-ProRule" id="PRU00159"/>
    </source>
</evidence>
<evidence type="ECO:0000255" key="3">
    <source>
        <dbReference type="PROSITE-ProRule" id="PRU10027"/>
    </source>
</evidence>
<evidence type="ECO:0000256" key="4">
    <source>
        <dbReference type="SAM" id="MobiDB-lite"/>
    </source>
</evidence>
<sequence length="352" mass="40171">MRPLPDQSAFEDKSELVSKKQKNEDENNENRSPETPRTPKVCPKTPTKTPLRTPTKNQAGVQFLTQKKRTKSCSSHFEYINQIGEGSFAKVYKARSFVDGRLYAVKKSKKPIWETSERNQHIQEIENGMKLGHHNNIAQVMCAWEEGGHIFIQMELCERGNLKDALNLAVQEEGGLGKLPEYMIWQYLCDIANGLSHVHEKGIMHLDIKPENLLFSNDGVLKIGDFGVCSTTTGGDDSEGDQIYMAPELLNDIHTPSADIFSLGITLYEMATNYNLPQKGQWWRNLREGKIPFPENDDSISQDLKDLIILMMNPDHTKRITIQSLLKYDKLQSVITLKRSTSTLYRLQRKLF</sequence>
<proteinExistence type="inferred from homology"/>
<comment type="catalytic activity">
    <reaction>
        <text>L-seryl-[protein] + ATP = O-phospho-L-seryl-[protein] + ADP + H(+)</text>
        <dbReference type="Rhea" id="RHEA:17989"/>
        <dbReference type="Rhea" id="RHEA-COMP:9863"/>
        <dbReference type="Rhea" id="RHEA-COMP:11604"/>
        <dbReference type="ChEBI" id="CHEBI:15378"/>
        <dbReference type="ChEBI" id="CHEBI:29999"/>
        <dbReference type="ChEBI" id="CHEBI:30616"/>
        <dbReference type="ChEBI" id="CHEBI:83421"/>
        <dbReference type="ChEBI" id="CHEBI:456216"/>
        <dbReference type="EC" id="2.7.11.1"/>
    </reaction>
</comment>
<comment type="catalytic activity">
    <reaction>
        <text>L-threonyl-[protein] + ATP = O-phospho-L-threonyl-[protein] + ADP + H(+)</text>
        <dbReference type="Rhea" id="RHEA:46608"/>
        <dbReference type="Rhea" id="RHEA-COMP:11060"/>
        <dbReference type="Rhea" id="RHEA-COMP:11605"/>
        <dbReference type="ChEBI" id="CHEBI:15378"/>
        <dbReference type="ChEBI" id="CHEBI:30013"/>
        <dbReference type="ChEBI" id="CHEBI:30616"/>
        <dbReference type="ChEBI" id="CHEBI:61977"/>
        <dbReference type="ChEBI" id="CHEBI:456216"/>
        <dbReference type="EC" id="2.7.11.1"/>
    </reaction>
</comment>
<comment type="similarity">
    <text evidence="2">Belongs to the protein kinase superfamily. Ser/Thr protein kinase family. WEE1 subfamily.</text>
</comment>